<proteinExistence type="inferred from homology"/>
<organism>
    <name type="scientific">Emericella nidulans (strain FGSC A4 / ATCC 38163 / CBS 112.46 / NRRL 194 / M139)</name>
    <name type="common">Aspergillus nidulans</name>
    <dbReference type="NCBI Taxonomy" id="227321"/>
    <lineage>
        <taxon>Eukaryota</taxon>
        <taxon>Fungi</taxon>
        <taxon>Dikarya</taxon>
        <taxon>Ascomycota</taxon>
        <taxon>Pezizomycotina</taxon>
        <taxon>Eurotiomycetes</taxon>
        <taxon>Eurotiomycetidae</taxon>
        <taxon>Eurotiales</taxon>
        <taxon>Aspergillaceae</taxon>
        <taxon>Aspergillus</taxon>
        <taxon>Aspergillus subgen. Nidulantes</taxon>
    </lineage>
</organism>
<dbReference type="EC" id="1.14.19.18" evidence="1"/>
<dbReference type="EMBL" id="BN001303">
    <property type="protein sequence ID" value="CBF77189.1"/>
    <property type="molecule type" value="Genomic_DNA"/>
</dbReference>
<dbReference type="EMBL" id="AACD01000079">
    <property type="protein sequence ID" value="EAA60394.1"/>
    <property type="status" value="ALT_SEQ"/>
    <property type="molecule type" value="Genomic_DNA"/>
</dbReference>
<dbReference type="RefSeq" id="XP_662196.1">
    <property type="nucleotide sequence ID" value="XM_657104.1"/>
</dbReference>
<dbReference type="SMR" id="C8V7U7"/>
<dbReference type="STRING" id="227321.C8V7U7"/>
<dbReference type="EnsemblFungi" id="CBF77189">
    <property type="protein sequence ID" value="CBF77189"/>
    <property type="gene ID" value="ANIA_04592"/>
</dbReference>
<dbReference type="GeneID" id="2872386"/>
<dbReference type="KEGG" id="ani:ANIA_04592"/>
<dbReference type="VEuPathDB" id="FungiDB:AN4592"/>
<dbReference type="eggNOG" id="KOG4232">
    <property type="taxonomic scope" value="Eukaryota"/>
</dbReference>
<dbReference type="HOGENOM" id="CLU_016265_3_1_1"/>
<dbReference type="InParanoid" id="C8V7U7"/>
<dbReference type="OMA" id="LYNCNYF"/>
<dbReference type="OrthoDB" id="260091at2759"/>
<dbReference type="UniPathway" id="UPA00222"/>
<dbReference type="Proteomes" id="UP000000560">
    <property type="component" value="Chromosome III"/>
</dbReference>
<dbReference type="GO" id="GO:0016020">
    <property type="term" value="C:membrane"/>
    <property type="evidence" value="ECO:0007669"/>
    <property type="project" value="UniProtKB-SubCell"/>
</dbReference>
<dbReference type="GO" id="GO:0046872">
    <property type="term" value="F:metal ion binding"/>
    <property type="evidence" value="ECO:0007669"/>
    <property type="project" value="UniProtKB-KW"/>
</dbReference>
<dbReference type="GO" id="GO:0016717">
    <property type="term" value="F:oxidoreductase activity, acting on paired donors, with oxidation of a pair of donors resulting in the reduction of molecular oxygen to two molecules of water"/>
    <property type="evidence" value="ECO:0000318"/>
    <property type="project" value="GO_Central"/>
</dbReference>
<dbReference type="GO" id="GO:0006629">
    <property type="term" value="P:lipid metabolic process"/>
    <property type="evidence" value="ECO:0000318"/>
    <property type="project" value="GO_Central"/>
</dbReference>
<dbReference type="GO" id="GO:0006665">
    <property type="term" value="P:sphingolipid metabolic process"/>
    <property type="evidence" value="ECO:0007669"/>
    <property type="project" value="UniProtKB-UniPathway"/>
</dbReference>
<dbReference type="CDD" id="cd03506">
    <property type="entry name" value="Delta6-FADS-like"/>
    <property type="match status" value="1"/>
</dbReference>
<dbReference type="Gene3D" id="3.10.120.10">
    <property type="entry name" value="Cytochrome b5-like heme/steroid binding domain"/>
    <property type="match status" value="1"/>
</dbReference>
<dbReference type="InterPro" id="IPR001199">
    <property type="entry name" value="Cyt_B5-like_heme/steroid-bd"/>
</dbReference>
<dbReference type="InterPro" id="IPR036400">
    <property type="entry name" value="Cyt_B5-like_heme/steroid_sf"/>
</dbReference>
<dbReference type="InterPro" id="IPR005804">
    <property type="entry name" value="FA_desaturase_dom"/>
</dbReference>
<dbReference type="InterPro" id="IPR012171">
    <property type="entry name" value="Fatty_acid_desaturase"/>
</dbReference>
<dbReference type="PANTHER" id="PTHR19353:SF30">
    <property type="entry name" value="DELTA 8-(E)-SPHINGOLIPID DESATURASE"/>
    <property type="match status" value="1"/>
</dbReference>
<dbReference type="PANTHER" id="PTHR19353">
    <property type="entry name" value="FATTY ACID DESATURASE 2"/>
    <property type="match status" value="1"/>
</dbReference>
<dbReference type="Pfam" id="PF00173">
    <property type="entry name" value="Cyt-b5"/>
    <property type="match status" value="1"/>
</dbReference>
<dbReference type="Pfam" id="PF00487">
    <property type="entry name" value="FA_desaturase"/>
    <property type="match status" value="1"/>
</dbReference>
<dbReference type="PIRSF" id="PIRSF015921">
    <property type="entry name" value="FA_sphinglp_des"/>
    <property type="match status" value="1"/>
</dbReference>
<dbReference type="SMART" id="SM01117">
    <property type="entry name" value="Cyt-b5"/>
    <property type="match status" value="1"/>
</dbReference>
<dbReference type="SUPFAM" id="SSF55856">
    <property type="entry name" value="Cytochrome b5-like heme/steroid binding domain"/>
    <property type="match status" value="1"/>
</dbReference>
<dbReference type="PROSITE" id="PS50255">
    <property type="entry name" value="CYTOCHROME_B5_2"/>
    <property type="match status" value="1"/>
</dbReference>
<sequence>MASHTKDALLSRRYIEGQIAAGKHIIIFDDRVLKVDSWIKFHPGGDKSIKHMVGQDATDEINALHSVEARQRMLAFQIGRIQGPWVNFLPPIQGGKFRHYDENADSEEDDTSGQSQPPSPIFDAVDAAPGVRRQYASSETSVSTPASESSEPKPFFLDARTREEIVLDTAKYPSLDAKTQQDIKRRYRELNKRIEAEGLYDCNYFSYFIEACRYTLFAGLSYFFLRLGWYSVSAVFLGCFWHQLVFSAHDAGHIAITHNYQVDSIIGILIADFLGGLSLGWWKRSHNVHHIVTNEPEHDPDIEHMPFFAISHRFFMNLRSTYYDRVMYFDAFSNFMLKYQHYLYYPILLFGRFNLYRLSWEYLILGQGPRKGPAWWHRWFEIAGQIFFWIWFGYGVLYCSIPTWGSRLSFLFISHMVTAPVHVQITLSHFAMSTADLGVQESFPQKMLRTTMDVDCPTWLDFFHGGLQFQAIHHLYPRIPRHNLRRTQKLVLEFCRDTGIPYALFTFTDGNKEVIGRLGDIAKQVRILEECRKSCAQQGVFSNHH</sequence>
<protein>
    <recommendedName>
        <fullName evidence="6">Delta 8-(E)-sphingolipid desaturase</fullName>
        <ecNumber evidence="1">1.14.19.18</ecNumber>
    </recommendedName>
</protein>
<evidence type="ECO:0000250" key="1">
    <source>
        <dbReference type="UniProtKB" id="Q8NKG8"/>
    </source>
</evidence>
<evidence type="ECO:0000255" key="2"/>
<evidence type="ECO:0000255" key="3">
    <source>
        <dbReference type="PROSITE-ProRule" id="PRU00279"/>
    </source>
</evidence>
<evidence type="ECO:0000256" key="4">
    <source>
        <dbReference type="SAM" id="MobiDB-lite"/>
    </source>
</evidence>
<evidence type="ECO:0000269" key="5">
    <source>
    </source>
</evidence>
<evidence type="ECO:0000303" key="6">
    <source>
    </source>
</evidence>
<evidence type="ECO:0000305" key="7"/>
<gene>
    <name evidence="6" type="primary">sdeA</name>
    <name type="ORF">AN4592</name>
    <name type="ORF">ANIA_04592</name>
</gene>
<accession>C8V7U7</accession>
<accession>Q5B4D8</accession>
<reference key="1">
    <citation type="journal article" date="2005" name="Nature">
        <title>Sequencing of Aspergillus nidulans and comparative analysis with A. fumigatus and A. oryzae.</title>
        <authorList>
            <person name="Galagan J.E."/>
            <person name="Calvo S.E."/>
            <person name="Cuomo C."/>
            <person name="Ma L.-J."/>
            <person name="Wortman J.R."/>
            <person name="Batzoglou S."/>
            <person name="Lee S.-I."/>
            <person name="Bastuerkmen M."/>
            <person name="Spevak C.C."/>
            <person name="Clutterbuck J."/>
            <person name="Kapitonov V."/>
            <person name="Jurka J."/>
            <person name="Scazzocchio C."/>
            <person name="Farman M.L."/>
            <person name="Butler J."/>
            <person name="Purcell S."/>
            <person name="Harris S."/>
            <person name="Braus G.H."/>
            <person name="Draht O."/>
            <person name="Busch S."/>
            <person name="D'Enfert C."/>
            <person name="Bouchier C."/>
            <person name="Goldman G.H."/>
            <person name="Bell-Pedersen D."/>
            <person name="Griffiths-Jones S."/>
            <person name="Doonan J.H."/>
            <person name="Yu J."/>
            <person name="Vienken K."/>
            <person name="Pain A."/>
            <person name="Freitag M."/>
            <person name="Selker E.U."/>
            <person name="Archer D.B."/>
            <person name="Penalva M.A."/>
            <person name="Oakley B.R."/>
            <person name="Momany M."/>
            <person name="Tanaka T."/>
            <person name="Kumagai T."/>
            <person name="Asai K."/>
            <person name="Machida M."/>
            <person name="Nierman W.C."/>
            <person name="Denning D.W."/>
            <person name="Caddick M.X."/>
            <person name="Hynes M."/>
            <person name="Paoletti M."/>
            <person name="Fischer R."/>
            <person name="Miller B.L."/>
            <person name="Dyer P.S."/>
            <person name="Sachs M.S."/>
            <person name="Osmani S.A."/>
            <person name="Birren B.W."/>
        </authorList>
    </citation>
    <scope>NUCLEOTIDE SEQUENCE [LARGE SCALE GENOMIC DNA]</scope>
    <source>
        <strain>FGSC A4 / ATCC 38163 / CBS 112.46 / NRRL 194 / M139</strain>
    </source>
</reference>
<reference key="2">
    <citation type="journal article" date="2009" name="Fungal Genet. Biol.">
        <title>The 2008 update of the Aspergillus nidulans genome annotation: a community effort.</title>
        <authorList>
            <person name="Wortman J.R."/>
            <person name="Gilsenan J.M."/>
            <person name="Joardar V."/>
            <person name="Deegan J."/>
            <person name="Clutterbuck J."/>
            <person name="Andersen M.R."/>
            <person name="Archer D."/>
            <person name="Bencina M."/>
            <person name="Braus G."/>
            <person name="Coutinho P."/>
            <person name="von Dohren H."/>
            <person name="Doonan J."/>
            <person name="Driessen A.J."/>
            <person name="Durek P."/>
            <person name="Espeso E."/>
            <person name="Fekete E."/>
            <person name="Flipphi M."/>
            <person name="Estrada C.G."/>
            <person name="Geysens S."/>
            <person name="Goldman G."/>
            <person name="de Groot P.W."/>
            <person name="Hansen K."/>
            <person name="Harris S.D."/>
            <person name="Heinekamp T."/>
            <person name="Helmstaedt K."/>
            <person name="Henrissat B."/>
            <person name="Hofmann G."/>
            <person name="Homan T."/>
            <person name="Horio T."/>
            <person name="Horiuchi H."/>
            <person name="James S."/>
            <person name="Jones M."/>
            <person name="Karaffa L."/>
            <person name="Karanyi Z."/>
            <person name="Kato M."/>
            <person name="Keller N."/>
            <person name="Kelly D.E."/>
            <person name="Kiel J.A."/>
            <person name="Kim J.M."/>
            <person name="van der Klei I.J."/>
            <person name="Klis F.M."/>
            <person name="Kovalchuk A."/>
            <person name="Krasevec N."/>
            <person name="Kubicek C.P."/>
            <person name="Liu B."/>
            <person name="Maccabe A."/>
            <person name="Meyer V."/>
            <person name="Mirabito P."/>
            <person name="Miskei M."/>
            <person name="Mos M."/>
            <person name="Mullins J."/>
            <person name="Nelson D.R."/>
            <person name="Nielsen J."/>
            <person name="Oakley B.R."/>
            <person name="Osmani S.A."/>
            <person name="Pakula T."/>
            <person name="Paszewski A."/>
            <person name="Paulsen I."/>
            <person name="Pilsyk S."/>
            <person name="Pocsi I."/>
            <person name="Punt P.J."/>
            <person name="Ram A.F."/>
            <person name="Ren Q."/>
            <person name="Robellet X."/>
            <person name="Robson G."/>
            <person name="Seiboth B."/>
            <person name="van Solingen P."/>
            <person name="Specht T."/>
            <person name="Sun J."/>
            <person name="Taheri-Talesh N."/>
            <person name="Takeshita N."/>
            <person name="Ussery D."/>
            <person name="vanKuyk P.A."/>
            <person name="Visser H."/>
            <person name="van de Vondervoort P.J."/>
            <person name="de Vries R.P."/>
            <person name="Walton J."/>
            <person name="Xiang X."/>
            <person name="Xiong Y."/>
            <person name="Zeng A.P."/>
            <person name="Brandt B.W."/>
            <person name="Cornell M.J."/>
            <person name="van den Hondel C.A."/>
            <person name="Visser J."/>
            <person name="Oliver S.G."/>
            <person name="Turner G."/>
        </authorList>
    </citation>
    <scope>GENOME REANNOTATION</scope>
    <source>
        <strain>FGSC A4 / ATCC 38163 / CBS 112.46 / NRRL 194 / M139</strain>
    </source>
</reference>
<reference key="3">
    <citation type="journal article" date="2016" name="Mol. Microbiol.">
        <title>Functional characterization of the Aspergillus nidulans glucosylceramide pathway reveals that LCB Delta8-desaturation and C9-methylation are relevant to filamentous growth, lipid raft localization and Psd1 defensin activity.</title>
        <authorList>
            <person name="Fernandes C.M."/>
            <person name="de Castro P.A."/>
            <person name="Singh A."/>
            <person name="Fonseca F.L."/>
            <person name="Pereira M.D."/>
            <person name="Vila T.V."/>
            <person name="Atella G.C."/>
            <person name="Rozental S."/>
            <person name="Savoldi M."/>
            <person name="Del Poeta M."/>
            <person name="Goldman G.H."/>
            <person name="Kurtenbach E."/>
        </authorList>
    </citation>
    <scope>FUNCTION</scope>
    <scope>PATHWAY</scope>
    <scope>DISRUPTION PHENOTYPE</scope>
</reference>
<name>SDEA_EMENI</name>
<comment type="function">
    <text evidence="1 5">Delta(8)-fatty-acid desaturase which introduces a double bond at the 8-position in the long-chain base (LCB) of ceramides (PubMed:27479571). Required for the formation of the di-unsaturated sphingoid base (E,E)-sphinga-4,8-dienine during glucosylceramide (GluCer) biosynthesis (By similarity). Plays an important role in conidiation (PubMed:27479571).</text>
</comment>
<comment type="catalytic activity">
    <reaction evidence="1">
        <text>an N-acylsphing-4-enine + 2 Fe(II)-[cytochrome b5] + O2 + 2 H(+) = a (4E,8E)-4-sphinga-4,8-dienine ceramide + 2 Fe(III)-[cytochrome b5] + 2 H2O</text>
        <dbReference type="Rhea" id="RHEA:46280"/>
        <dbReference type="Rhea" id="RHEA-COMP:10438"/>
        <dbReference type="Rhea" id="RHEA-COMP:10439"/>
        <dbReference type="ChEBI" id="CHEBI:15377"/>
        <dbReference type="ChEBI" id="CHEBI:15378"/>
        <dbReference type="ChEBI" id="CHEBI:15379"/>
        <dbReference type="ChEBI" id="CHEBI:29033"/>
        <dbReference type="ChEBI" id="CHEBI:29034"/>
        <dbReference type="ChEBI" id="CHEBI:52639"/>
        <dbReference type="ChEBI" id="CHEBI:85953"/>
        <dbReference type="EC" id="1.14.19.18"/>
    </reaction>
    <physiologicalReaction direction="left-to-right" evidence="1">
        <dbReference type="Rhea" id="RHEA:46281"/>
    </physiologicalReaction>
</comment>
<comment type="pathway">
    <text evidence="5">Lipid metabolism; sphingolipid metabolism.</text>
</comment>
<comment type="subcellular location">
    <subcellularLocation>
        <location evidence="2">Membrane</location>
        <topology evidence="2">Multi-pass membrane protein</topology>
    </subcellularLocation>
</comment>
<comment type="domain">
    <text evidence="7">The histidine box domains may contain the active site and/or be involved in metal ion binding.</text>
</comment>
<comment type="disruption phenotype">
    <text evidence="5">Leads to increased resistance to cell-wall-damaging agents, such as calcofluor white (CFW) and Congo red (CR) (PubMed:27479571). Accumulates C8-saturated and unmethylated glucosylceramides (PubMed:27479571). Displays growth and conidiation defects as well as and raft mislocalization (PubMed:27479571).</text>
</comment>
<comment type="similarity">
    <text evidence="7">Belongs to the fatty acid desaturase type 1 family.</text>
</comment>
<comment type="sequence caution" evidence="7">
    <conflict type="erroneous gene model prediction">
        <sequence resource="EMBL-CDS" id="EAA60394"/>
    </conflict>
</comment>
<keyword id="KW-0349">Heme</keyword>
<keyword id="KW-0408">Iron</keyword>
<keyword id="KW-0443">Lipid metabolism</keyword>
<keyword id="KW-0472">Membrane</keyword>
<keyword id="KW-0479">Metal-binding</keyword>
<keyword id="KW-0560">Oxidoreductase</keyword>
<keyword id="KW-1185">Reference proteome</keyword>
<keyword id="KW-0746">Sphingolipid metabolism</keyword>
<keyword id="KW-0812">Transmembrane</keyword>
<keyword id="KW-1133">Transmembrane helix</keyword>
<feature type="chain" id="PRO_0000457169" description="Delta 8-(E)-sphingolipid desaturase">
    <location>
        <begin position="1"/>
        <end position="545"/>
    </location>
</feature>
<feature type="transmembrane region" description="Helical" evidence="2">
    <location>
        <begin position="227"/>
        <end position="247"/>
    </location>
</feature>
<feature type="transmembrane region" description="Helical" evidence="2">
    <location>
        <begin position="262"/>
        <end position="282"/>
    </location>
</feature>
<feature type="transmembrane region" description="Helical" evidence="2">
    <location>
        <begin position="382"/>
        <end position="402"/>
    </location>
</feature>
<feature type="transmembrane region" description="Helical" evidence="2">
    <location>
        <begin position="408"/>
        <end position="428"/>
    </location>
</feature>
<feature type="domain" description="Cytochrome b5 heme-binding" evidence="3">
    <location>
        <begin position="1"/>
        <end position="82"/>
    </location>
</feature>
<feature type="region of interest" description="Disordered" evidence="4">
    <location>
        <begin position="97"/>
        <end position="124"/>
    </location>
</feature>
<feature type="short sequence motif" description="Histidine box-1" evidence="7">
    <location>
        <begin position="249"/>
        <end position="253"/>
    </location>
</feature>
<feature type="short sequence motif" description="Histidine box-2" evidence="7">
    <location>
        <begin position="286"/>
        <end position="290"/>
    </location>
</feature>
<feature type="short sequence motif" description="Histidine box-3" evidence="7">
    <location>
        <begin position="470"/>
        <end position="474"/>
    </location>
</feature>
<feature type="binding site" description="axial binding residue" evidence="3">
    <location>
        <position position="42"/>
    </location>
    <ligand>
        <name>heme</name>
        <dbReference type="ChEBI" id="CHEBI:30413"/>
    </ligand>
    <ligandPart>
        <name>Fe</name>
        <dbReference type="ChEBI" id="CHEBI:18248"/>
    </ligandPart>
</feature>
<feature type="binding site" description="axial binding residue" evidence="3">
    <location>
        <position position="65"/>
    </location>
    <ligand>
        <name>heme</name>
        <dbReference type="ChEBI" id="CHEBI:30413"/>
    </ligand>
    <ligandPart>
        <name>Fe</name>
        <dbReference type="ChEBI" id="CHEBI:18248"/>
    </ligandPart>
</feature>